<organism>
    <name type="scientific">Campylobacter jejuni (strain RM1221)</name>
    <dbReference type="NCBI Taxonomy" id="195099"/>
    <lineage>
        <taxon>Bacteria</taxon>
        <taxon>Pseudomonadati</taxon>
        <taxon>Campylobacterota</taxon>
        <taxon>Epsilonproteobacteria</taxon>
        <taxon>Campylobacterales</taxon>
        <taxon>Campylobacteraceae</taxon>
        <taxon>Campylobacter</taxon>
    </lineage>
</organism>
<name>LEUC_CAMJR</name>
<protein>
    <recommendedName>
        <fullName evidence="1">3-isopropylmalate dehydratase large subunit</fullName>
        <ecNumber evidence="1">4.2.1.33</ecNumber>
    </recommendedName>
    <alternativeName>
        <fullName evidence="1">Alpha-IPM isomerase</fullName>
        <shortName evidence="1">IPMI</shortName>
    </alternativeName>
    <alternativeName>
        <fullName evidence="1">Isopropylmalate isomerase</fullName>
    </alternativeName>
</protein>
<proteinExistence type="inferred from homology"/>
<comment type="function">
    <text evidence="1">Catalyzes the isomerization between 2-isopropylmalate and 3-isopropylmalate, via the formation of 2-isopropylmaleate.</text>
</comment>
<comment type="catalytic activity">
    <reaction evidence="1">
        <text>(2R,3S)-3-isopropylmalate = (2S)-2-isopropylmalate</text>
        <dbReference type="Rhea" id="RHEA:32287"/>
        <dbReference type="ChEBI" id="CHEBI:1178"/>
        <dbReference type="ChEBI" id="CHEBI:35121"/>
        <dbReference type="EC" id="4.2.1.33"/>
    </reaction>
</comment>
<comment type="cofactor">
    <cofactor evidence="1">
        <name>[4Fe-4S] cluster</name>
        <dbReference type="ChEBI" id="CHEBI:49883"/>
    </cofactor>
    <text evidence="1">Binds 1 [4Fe-4S] cluster per subunit.</text>
</comment>
<comment type="pathway">
    <text evidence="1">Amino-acid biosynthesis; L-leucine biosynthesis; L-leucine from 3-methyl-2-oxobutanoate: step 2/4.</text>
</comment>
<comment type="subunit">
    <text evidence="1">Heterodimer of LeuC and LeuD.</text>
</comment>
<comment type="similarity">
    <text evidence="1">Belongs to the aconitase/IPM isomerase family. LeuC type 1 subfamily.</text>
</comment>
<accession>Q5HS78</accession>
<reference key="1">
    <citation type="journal article" date="2005" name="PLoS Biol.">
        <title>Major structural differences and novel potential virulence mechanisms from the genomes of multiple Campylobacter species.</title>
        <authorList>
            <person name="Fouts D.E."/>
            <person name="Mongodin E.F."/>
            <person name="Mandrell R.E."/>
            <person name="Miller W.G."/>
            <person name="Rasko D.A."/>
            <person name="Ravel J."/>
            <person name="Brinkac L.M."/>
            <person name="DeBoy R.T."/>
            <person name="Parker C.T."/>
            <person name="Daugherty S.C."/>
            <person name="Dodson R.J."/>
            <person name="Durkin A.S."/>
            <person name="Madupu R."/>
            <person name="Sullivan S.A."/>
            <person name="Shetty J.U."/>
            <person name="Ayodeji M.A."/>
            <person name="Shvartsbeyn A."/>
            <person name="Schatz M.C."/>
            <person name="Badger J.H."/>
            <person name="Fraser C.M."/>
            <person name="Nelson K.E."/>
        </authorList>
    </citation>
    <scope>NUCLEOTIDE SEQUENCE [LARGE SCALE GENOMIC DNA]</scope>
    <source>
        <strain>RM1221</strain>
    </source>
</reference>
<feature type="chain" id="PRO_0000076735" description="3-isopropylmalate dehydratase large subunit">
    <location>
        <begin position="1"/>
        <end position="468"/>
    </location>
</feature>
<feature type="binding site" evidence="1">
    <location>
        <position position="347"/>
    </location>
    <ligand>
        <name>[4Fe-4S] cluster</name>
        <dbReference type="ChEBI" id="CHEBI:49883"/>
    </ligand>
</feature>
<feature type="binding site" evidence="1">
    <location>
        <position position="407"/>
    </location>
    <ligand>
        <name>[4Fe-4S] cluster</name>
        <dbReference type="ChEBI" id="CHEBI:49883"/>
    </ligand>
</feature>
<feature type="binding site" evidence="1">
    <location>
        <position position="410"/>
    </location>
    <ligand>
        <name>[4Fe-4S] cluster</name>
        <dbReference type="ChEBI" id="CHEBI:49883"/>
    </ligand>
</feature>
<keyword id="KW-0004">4Fe-4S</keyword>
<keyword id="KW-0028">Amino-acid biosynthesis</keyword>
<keyword id="KW-0100">Branched-chain amino acid biosynthesis</keyword>
<keyword id="KW-0408">Iron</keyword>
<keyword id="KW-0411">Iron-sulfur</keyword>
<keyword id="KW-0432">Leucine biosynthesis</keyword>
<keyword id="KW-0456">Lyase</keyword>
<keyword id="KW-0479">Metal-binding</keyword>
<evidence type="ECO:0000255" key="1">
    <source>
        <dbReference type="HAMAP-Rule" id="MF_01026"/>
    </source>
</evidence>
<dbReference type="EC" id="4.2.1.33" evidence="1"/>
<dbReference type="EMBL" id="CP000025">
    <property type="protein sequence ID" value="AAW34487.1"/>
    <property type="molecule type" value="Genomic_DNA"/>
</dbReference>
<dbReference type="SMR" id="Q5HS78"/>
<dbReference type="KEGG" id="cjr:CJE1887"/>
<dbReference type="HOGENOM" id="CLU_006714_3_4_7"/>
<dbReference type="UniPathway" id="UPA00048">
    <property type="reaction ID" value="UER00071"/>
</dbReference>
<dbReference type="GO" id="GO:0003861">
    <property type="term" value="F:3-isopropylmalate dehydratase activity"/>
    <property type="evidence" value="ECO:0007669"/>
    <property type="project" value="UniProtKB-UniRule"/>
</dbReference>
<dbReference type="GO" id="GO:0051539">
    <property type="term" value="F:4 iron, 4 sulfur cluster binding"/>
    <property type="evidence" value="ECO:0007669"/>
    <property type="project" value="UniProtKB-KW"/>
</dbReference>
<dbReference type="GO" id="GO:0046872">
    <property type="term" value="F:metal ion binding"/>
    <property type="evidence" value="ECO:0007669"/>
    <property type="project" value="UniProtKB-KW"/>
</dbReference>
<dbReference type="GO" id="GO:0009098">
    <property type="term" value="P:L-leucine biosynthetic process"/>
    <property type="evidence" value="ECO:0007669"/>
    <property type="project" value="UniProtKB-UniRule"/>
</dbReference>
<dbReference type="CDD" id="cd01583">
    <property type="entry name" value="IPMI"/>
    <property type="match status" value="1"/>
</dbReference>
<dbReference type="FunFam" id="3.30.499.10:FF:000007">
    <property type="entry name" value="3-isopropylmalate dehydratase large subunit"/>
    <property type="match status" value="1"/>
</dbReference>
<dbReference type="Gene3D" id="3.30.499.10">
    <property type="entry name" value="Aconitase, domain 3"/>
    <property type="match status" value="2"/>
</dbReference>
<dbReference type="HAMAP" id="MF_01026">
    <property type="entry name" value="LeuC_type1"/>
    <property type="match status" value="1"/>
</dbReference>
<dbReference type="InterPro" id="IPR004430">
    <property type="entry name" value="3-IsopropMal_deHydase_lsu"/>
</dbReference>
<dbReference type="InterPro" id="IPR015931">
    <property type="entry name" value="Acnase/IPM_dHydase_lsu_aba_1/3"/>
</dbReference>
<dbReference type="InterPro" id="IPR001030">
    <property type="entry name" value="Acoase/IPM_deHydtase_lsu_aba"/>
</dbReference>
<dbReference type="InterPro" id="IPR018136">
    <property type="entry name" value="Aconitase_4Fe-4S_BS"/>
</dbReference>
<dbReference type="InterPro" id="IPR036008">
    <property type="entry name" value="Aconitase_4Fe-4S_dom"/>
</dbReference>
<dbReference type="InterPro" id="IPR050067">
    <property type="entry name" value="IPM_dehydratase_rel_enz"/>
</dbReference>
<dbReference type="InterPro" id="IPR033941">
    <property type="entry name" value="IPMI_cat"/>
</dbReference>
<dbReference type="NCBIfam" id="TIGR00170">
    <property type="entry name" value="leuC"/>
    <property type="match status" value="1"/>
</dbReference>
<dbReference type="NCBIfam" id="NF004016">
    <property type="entry name" value="PRK05478.1"/>
    <property type="match status" value="1"/>
</dbReference>
<dbReference type="NCBIfam" id="NF009116">
    <property type="entry name" value="PRK12466.1"/>
    <property type="match status" value="1"/>
</dbReference>
<dbReference type="PANTHER" id="PTHR43822:SF9">
    <property type="entry name" value="3-ISOPROPYLMALATE DEHYDRATASE"/>
    <property type="match status" value="1"/>
</dbReference>
<dbReference type="PANTHER" id="PTHR43822">
    <property type="entry name" value="HOMOACONITASE, MITOCHONDRIAL-RELATED"/>
    <property type="match status" value="1"/>
</dbReference>
<dbReference type="Pfam" id="PF00330">
    <property type="entry name" value="Aconitase"/>
    <property type="match status" value="1"/>
</dbReference>
<dbReference type="PRINTS" id="PR00415">
    <property type="entry name" value="ACONITASE"/>
</dbReference>
<dbReference type="SUPFAM" id="SSF53732">
    <property type="entry name" value="Aconitase iron-sulfur domain"/>
    <property type="match status" value="1"/>
</dbReference>
<dbReference type="PROSITE" id="PS00450">
    <property type="entry name" value="ACONITASE_1"/>
    <property type="match status" value="1"/>
</dbReference>
<dbReference type="PROSITE" id="PS01244">
    <property type="entry name" value="ACONITASE_2"/>
    <property type="match status" value="1"/>
</dbReference>
<sequence length="468" mass="51446">MAKTLYEKVFDAHVVYEGKNELPILYIDRHLIHEVTSPQAFSGLKMAKRRMARADLTLATIDHDVSTKSVDLNACSDMAKEQITTLMQNTKEFGVRLLGLGDKNQGIVHIVGPELGFTLPGVTLVCGDSHTATHGAFGALAFGIGTSEVEHVMATQTLKQAKLKTMKIECKGQFQKGVYTKDLILYLIAQYGTAKGTGYAIEFCGELIRNLSMEARMTLCNMAIEFGAKVGMIAPDEITFEYIKGKEFAPKGEEFQKYCEYWKSLRSDEGAKYDASITLDVSKIKPQISYGTNPSQVIGIDEKIPKISDFKNQSEQKSLLDALYYVNLEQDQVIEGVKIDIVFIGSCTNGRLEDLKIAADILKGRKIHKNVKALIVPGSMQVRKEAENLGLDKIFIEAGCEWRYAGCSMCLGMNDDKANSGQRVASTSNRNFVGRQGKGSITHLMSPASAAACAIEGVICDNRKYLGV</sequence>
<gene>
    <name evidence="1" type="primary">leuC</name>
    <name type="ordered locus">CJE1887</name>
</gene>